<gene>
    <name evidence="1" type="primary">atpA</name>
    <name type="ordered locus">Krad_1268</name>
</gene>
<comment type="function">
    <text evidence="1">Produces ATP from ADP in the presence of a proton gradient across the membrane. The alpha chain is a regulatory subunit.</text>
</comment>
<comment type="catalytic activity">
    <reaction evidence="1">
        <text>ATP + H2O + 4 H(+)(in) = ADP + phosphate + 5 H(+)(out)</text>
        <dbReference type="Rhea" id="RHEA:57720"/>
        <dbReference type="ChEBI" id="CHEBI:15377"/>
        <dbReference type="ChEBI" id="CHEBI:15378"/>
        <dbReference type="ChEBI" id="CHEBI:30616"/>
        <dbReference type="ChEBI" id="CHEBI:43474"/>
        <dbReference type="ChEBI" id="CHEBI:456216"/>
        <dbReference type="EC" id="7.1.2.2"/>
    </reaction>
</comment>
<comment type="subunit">
    <text evidence="1">F-type ATPases have 2 components, CF(1) - the catalytic core - and CF(0) - the membrane proton channel. CF(1) has five subunits: alpha(3), beta(3), gamma(1), delta(1), epsilon(1). CF(0) has three main subunits: a(1), b(2) and c(9-12). The alpha and beta chains form an alternating ring which encloses part of the gamma chain. CF(1) is attached to CF(0) by a central stalk formed by the gamma and epsilon chains, while a peripheral stalk is formed by the delta and b chains.</text>
</comment>
<comment type="subcellular location">
    <subcellularLocation>
        <location evidence="1">Cell membrane</location>
        <topology evidence="1">Peripheral membrane protein</topology>
    </subcellularLocation>
</comment>
<comment type="similarity">
    <text evidence="1">Belongs to the ATPase alpha/beta chains family.</text>
</comment>
<proteinExistence type="inferred from homology"/>
<evidence type="ECO:0000255" key="1">
    <source>
        <dbReference type="HAMAP-Rule" id="MF_01346"/>
    </source>
</evidence>
<evidence type="ECO:0000256" key="2">
    <source>
        <dbReference type="SAM" id="MobiDB-lite"/>
    </source>
</evidence>
<reference key="1">
    <citation type="journal article" date="2008" name="PLoS ONE">
        <title>Survival in nuclear waste, extreme resistance, and potential applications gleaned from the genome sequence of Kineococcus radiotolerans SRS30216.</title>
        <authorList>
            <person name="Bagwell C.E."/>
            <person name="Bhat S."/>
            <person name="Hawkins G.M."/>
            <person name="Smith B.W."/>
            <person name="Biswas T."/>
            <person name="Hoover T.R."/>
            <person name="Saunders E."/>
            <person name="Han C.S."/>
            <person name="Tsodikov O.V."/>
            <person name="Shimkets L.J."/>
        </authorList>
    </citation>
    <scope>NUCLEOTIDE SEQUENCE [LARGE SCALE GENOMIC DNA]</scope>
    <source>
        <strain>ATCC BAA-149 / DSM 14245 / SRS30216</strain>
    </source>
</reference>
<organism>
    <name type="scientific">Kineococcus radiotolerans (strain ATCC BAA-149 / DSM 14245 / SRS30216)</name>
    <dbReference type="NCBI Taxonomy" id="266940"/>
    <lineage>
        <taxon>Bacteria</taxon>
        <taxon>Bacillati</taxon>
        <taxon>Actinomycetota</taxon>
        <taxon>Actinomycetes</taxon>
        <taxon>Kineosporiales</taxon>
        <taxon>Kineosporiaceae</taxon>
        <taxon>Kineococcus</taxon>
    </lineage>
</organism>
<feature type="chain" id="PRO_1000086881" description="ATP synthase subunit alpha">
    <location>
        <begin position="1"/>
        <end position="552"/>
    </location>
</feature>
<feature type="region of interest" description="Disordered" evidence="2">
    <location>
        <begin position="509"/>
        <end position="552"/>
    </location>
</feature>
<feature type="binding site" evidence="1">
    <location>
        <begin position="173"/>
        <end position="180"/>
    </location>
    <ligand>
        <name>ATP</name>
        <dbReference type="ChEBI" id="CHEBI:30616"/>
    </ligand>
</feature>
<feature type="site" description="Required for activity" evidence="1">
    <location>
        <position position="374"/>
    </location>
</feature>
<keyword id="KW-0066">ATP synthesis</keyword>
<keyword id="KW-0067">ATP-binding</keyword>
<keyword id="KW-1003">Cell membrane</keyword>
<keyword id="KW-0139">CF(1)</keyword>
<keyword id="KW-0375">Hydrogen ion transport</keyword>
<keyword id="KW-0406">Ion transport</keyword>
<keyword id="KW-0472">Membrane</keyword>
<keyword id="KW-0547">Nucleotide-binding</keyword>
<keyword id="KW-1185">Reference proteome</keyword>
<keyword id="KW-1278">Translocase</keyword>
<keyword id="KW-0813">Transport</keyword>
<name>ATPA_KINRD</name>
<accession>A6W7G7</accession>
<sequence length="552" mass="59405">MAELTIRPEEIRDALDAFVASYDPGTAAREEVGRVTDAGDGIAHVEGLPSVMANELLRFQDGTLGLAQNLDVRDIGVVVLGDYAGIEEGQEVHRTGEVLSVPVGDNFLGRVVDPLGAPIDGLGPIEAETRRALELQAPSVMQRQEVREPLQTGIKAIDAMIPVGRGQRQLIIGDRQTGKSAIAIDTIINQKANWESGDPKQQVRCIYVAIGQKGSTIAAVRRSLEEAGAMEYTTIVAAPASDPAGFKYLAPYTGSSIGQHWMYGGKHVLIVFDDLSKQAEAYRAVSLLLRRPPGREAYPGDVFYLHSRLLERCAKLSDELGGGSMTGLPFIETKGNDVSAYIPTNVISITDGQIFLQSDLFNANQRPAIDVGISVSRVGGAAQTKAIKGISGTLKLDLAQFRAMEAFAMFASDLDQASRNQLARGARLVELLKQPQYTPFSLEEQVVSIWAGTTGQLDSVEVSDISRFEREFLEYVKRNHAGVMQGIRETKQFSDGAKDELKKAVDAFKPQFSGGSKGSNVPKDVDAGATDADDISQEKITTRKGGATAARG</sequence>
<dbReference type="EC" id="7.1.2.2" evidence="1"/>
<dbReference type="EMBL" id="CP000750">
    <property type="protein sequence ID" value="ABS02756.1"/>
    <property type="molecule type" value="Genomic_DNA"/>
</dbReference>
<dbReference type="RefSeq" id="WP_012084388.1">
    <property type="nucleotide sequence ID" value="NC_009664.2"/>
</dbReference>
<dbReference type="SMR" id="A6W7G7"/>
<dbReference type="STRING" id="266940.Krad_1268"/>
<dbReference type="KEGG" id="kra:Krad_1268"/>
<dbReference type="eggNOG" id="COG0056">
    <property type="taxonomic scope" value="Bacteria"/>
</dbReference>
<dbReference type="HOGENOM" id="CLU_010091_2_1_11"/>
<dbReference type="OrthoDB" id="9803053at2"/>
<dbReference type="Proteomes" id="UP000001116">
    <property type="component" value="Chromosome"/>
</dbReference>
<dbReference type="GO" id="GO:0005886">
    <property type="term" value="C:plasma membrane"/>
    <property type="evidence" value="ECO:0007669"/>
    <property type="project" value="UniProtKB-SubCell"/>
</dbReference>
<dbReference type="GO" id="GO:0045259">
    <property type="term" value="C:proton-transporting ATP synthase complex"/>
    <property type="evidence" value="ECO:0007669"/>
    <property type="project" value="UniProtKB-KW"/>
</dbReference>
<dbReference type="GO" id="GO:0043531">
    <property type="term" value="F:ADP binding"/>
    <property type="evidence" value="ECO:0007669"/>
    <property type="project" value="TreeGrafter"/>
</dbReference>
<dbReference type="GO" id="GO:0005524">
    <property type="term" value="F:ATP binding"/>
    <property type="evidence" value="ECO:0007669"/>
    <property type="project" value="UniProtKB-UniRule"/>
</dbReference>
<dbReference type="GO" id="GO:0046933">
    <property type="term" value="F:proton-transporting ATP synthase activity, rotational mechanism"/>
    <property type="evidence" value="ECO:0007669"/>
    <property type="project" value="UniProtKB-UniRule"/>
</dbReference>
<dbReference type="CDD" id="cd18113">
    <property type="entry name" value="ATP-synt_F1_alpha_C"/>
    <property type="match status" value="1"/>
</dbReference>
<dbReference type="CDD" id="cd18116">
    <property type="entry name" value="ATP-synt_F1_alpha_N"/>
    <property type="match status" value="1"/>
</dbReference>
<dbReference type="CDD" id="cd01132">
    <property type="entry name" value="F1-ATPase_alpha_CD"/>
    <property type="match status" value="1"/>
</dbReference>
<dbReference type="FunFam" id="1.20.150.20:FF:000001">
    <property type="entry name" value="ATP synthase subunit alpha"/>
    <property type="match status" value="1"/>
</dbReference>
<dbReference type="FunFam" id="3.40.50.300:FF:000002">
    <property type="entry name" value="ATP synthase subunit alpha"/>
    <property type="match status" value="1"/>
</dbReference>
<dbReference type="Gene3D" id="2.40.30.20">
    <property type="match status" value="1"/>
</dbReference>
<dbReference type="Gene3D" id="1.20.150.20">
    <property type="entry name" value="ATP synthase alpha/beta chain, C-terminal domain"/>
    <property type="match status" value="1"/>
</dbReference>
<dbReference type="Gene3D" id="3.40.50.300">
    <property type="entry name" value="P-loop containing nucleotide triphosphate hydrolases"/>
    <property type="match status" value="1"/>
</dbReference>
<dbReference type="HAMAP" id="MF_01346">
    <property type="entry name" value="ATP_synth_alpha_bact"/>
    <property type="match status" value="1"/>
</dbReference>
<dbReference type="InterPro" id="IPR023366">
    <property type="entry name" value="ATP_synth_asu-like_sf"/>
</dbReference>
<dbReference type="InterPro" id="IPR000793">
    <property type="entry name" value="ATP_synth_asu_C"/>
</dbReference>
<dbReference type="InterPro" id="IPR038376">
    <property type="entry name" value="ATP_synth_asu_C_sf"/>
</dbReference>
<dbReference type="InterPro" id="IPR033732">
    <property type="entry name" value="ATP_synth_F1_a_nt-bd_dom"/>
</dbReference>
<dbReference type="InterPro" id="IPR005294">
    <property type="entry name" value="ATP_synth_F1_asu"/>
</dbReference>
<dbReference type="InterPro" id="IPR020003">
    <property type="entry name" value="ATPase_a/bsu_AS"/>
</dbReference>
<dbReference type="InterPro" id="IPR004100">
    <property type="entry name" value="ATPase_F1/V1/A1_a/bsu_N"/>
</dbReference>
<dbReference type="InterPro" id="IPR036121">
    <property type="entry name" value="ATPase_F1/V1/A1_a/bsu_N_sf"/>
</dbReference>
<dbReference type="InterPro" id="IPR000194">
    <property type="entry name" value="ATPase_F1/V1/A1_a/bsu_nucl-bd"/>
</dbReference>
<dbReference type="InterPro" id="IPR027417">
    <property type="entry name" value="P-loop_NTPase"/>
</dbReference>
<dbReference type="NCBIfam" id="TIGR00962">
    <property type="entry name" value="atpA"/>
    <property type="match status" value="1"/>
</dbReference>
<dbReference type="NCBIfam" id="NF009884">
    <property type="entry name" value="PRK13343.1"/>
    <property type="match status" value="1"/>
</dbReference>
<dbReference type="PANTHER" id="PTHR48082">
    <property type="entry name" value="ATP SYNTHASE SUBUNIT ALPHA, MITOCHONDRIAL"/>
    <property type="match status" value="1"/>
</dbReference>
<dbReference type="PANTHER" id="PTHR48082:SF2">
    <property type="entry name" value="ATP SYNTHASE SUBUNIT ALPHA, MITOCHONDRIAL"/>
    <property type="match status" value="1"/>
</dbReference>
<dbReference type="Pfam" id="PF00006">
    <property type="entry name" value="ATP-synt_ab"/>
    <property type="match status" value="1"/>
</dbReference>
<dbReference type="Pfam" id="PF00306">
    <property type="entry name" value="ATP-synt_ab_C"/>
    <property type="match status" value="1"/>
</dbReference>
<dbReference type="Pfam" id="PF02874">
    <property type="entry name" value="ATP-synt_ab_N"/>
    <property type="match status" value="1"/>
</dbReference>
<dbReference type="SUPFAM" id="SSF47917">
    <property type="entry name" value="C-terminal domain of alpha and beta subunits of F1 ATP synthase"/>
    <property type="match status" value="1"/>
</dbReference>
<dbReference type="SUPFAM" id="SSF50615">
    <property type="entry name" value="N-terminal domain of alpha and beta subunits of F1 ATP synthase"/>
    <property type="match status" value="1"/>
</dbReference>
<dbReference type="SUPFAM" id="SSF52540">
    <property type="entry name" value="P-loop containing nucleoside triphosphate hydrolases"/>
    <property type="match status" value="1"/>
</dbReference>
<dbReference type="PROSITE" id="PS00152">
    <property type="entry name" value="ATPASE_ALPHA_BETA"/>
    <property type="match status" value="1"/>
</dbReference>
<protein>
    <recommendedName>
        <fullName evidence="1">ATP synthase subunit alpha</fullName>
        <ecNumber evidence="1">7.1.2.2</ecNumber>
    </recommendedName>
    <alternativeName>
        <fullName evidence="1">ATP synthase F1 sector subunit alpha</fullName>
    </alternativeName>
    <alternativeName>
        <fullName evidence="1">F-ATPase subunit alpha</fullName>
    </alternativeName>
</protein>